<dbReference type="EMBL" id="BX248583">
    <property type="protein sequence ID" value="CAD83230.1"/>
    <property type="molecule type" value="Genomic_DNA"/>
</dbReference>
<dbReference type="SMR" id="Q7VRQ6"/>
<dbReference type="STRING" id="203907.Bfl544"/>
<dbReference type="KEGG" id="bfl:Bfl544"/>
<dbReference type="eggNOG" id="COG0576">
    <property type="taxonomic scope" value="Bacteria"/>
</dbReference>
<dbReference type="HOGENOM" id="CLU_057217_6_0_6"/>
<dbReference type="OrthoDB" id="9789811at2"/>
<dbReference type="Proteomes" id="UP000002192">
    <property type="component" value="Chromosome"/>
</dbReference>
<dbReference type="GO" id="GO:0005829">
    <property type="term" value="C:cytosol"/>
    <property type="evidence" value="ECO:0007669"/>
    <property type="project" value="TreeGrafter"/>
</dbReference>
<dbReference type="GO" id="GO:0000774">
    <property type="term" value="F:adenyl-nucleotide exchange factor activity"/>
    <property type="evidence" value="ECO:0007669"/>
    <property type="project" value="InterPro"/>
</dbReference>
<dbReference type="GO" id="GO:0042803">
    <property type="term" value="F:protein homodimerization activity"/>
    <property type="evidence" value="ECO:0007669"/>
    <property type="project" value="InterPro"/>
</dbReference>
<dbReference type="GO" id="GO:0051087">
    <property type="term" value="F:protein-folding chaperone binding"/>
    <property type="evidence" value="ECO:0007669"/>
    <property type="project" value="InterPro"/>
</dbReference>
<dbReference type="GO" id="GO:0051082">
    <property type="term" value="F:unfolded protein binding"/>
    <property type="evidence" value="ECO:0007669"/>
    <property type="project" value="TreeGrafter"/>
</dbReference>
<dbReference type="GO" id="GO:0006457">
    <property type="term" value="P:protein folding"/>
    <property type="evidence" value="ECO:0007669"/>
    <property type="project" value="InterPro"/>
</dbReference>
<dbReference type="CDD" id="cd00446">
    <property type="entry name" value="GrpE"/>
    <property type="match status" value="1"/>
</dbReference>
<dbReference type="FunFam" id="2.30.22.10:FF:000001">
    <property type="entry name" value="Protein GrpE"/>
    <property type="match status" value="1"/>
</dbReference>
<dbReference type="Gene3D" id="3.90.20.20">
    <property type="match status" value="1"/>
</dbReference>
<dbReference type="Gene3D" id="2.30.22.10">
    <property type="entry name" value="Head domain of nucleotide exchange factor GrpE"/>
    <property type="match status" value="1"/>
</dbReference>
<dbReference type="HAMAP" id="MF_01151">
    <property type="entry name" value="GrpE"/>
    <property type="match status" value="1"/>
</dbReference>
<dbReference type="InterPro" id="IPR000740">
    <property type="entry name" value="GrpE"/>
</dbReference>
<dbReference type="InterPro" id="IPR013805">
    <property type="entry name" value="GrpE_coiled_coil"/>
</dbReference>
<dbReference type="InterPro" id="IPR009012">
    <property type="entry name" value="GrpE_head"/>
</dbReference>
<dbReference type="NCBIfam" id="NF010738">
    <property type="entry name" value="PRK14140.1"/>
    <property type="match status" value="1"/>
</dbReference>
<dbReference type="NCBIfam" id="NF010748">
    <property type="entry name" value="PRK14150.1"/>
    <property type="match status" value="1"/>
</dbReference>
<dbReference type="PANTHER" id="PTHR21237">
    <property type="entry name" value="GRPE PROTEIN"/>
    <property type="match status" value="1"/>
</dbReference>
<dbReference type="PANTHER" id="PTHR21237:SF23">
    <property type="entry name" value="GRPE PROTEIN HOMOLOG, MITOCHONDRIAL"/>
    <property type="match status" value="1"/>
</dbReference>
<dbReference type="Pfam" id="PF01025">
    <property type="entry name" value="GrpE"/>
    <property type="match status" value="1"/>
</dbReference>
<dbReference type="PRINTS" id="PR00773">
    <property type="entry name" value="GRPEPROTEIN"/>
</dbReference>
<dbReference type="SUPFAM" id="SSF58014">
    <property type="entry name" value="Coiled-coil domain of nucleotide exchange factor GrpE"/>
    <property type="match status" value="1"/>
</dbReference>
<dbReference type="SUPFAM" id="SSF51064">
    <property type="entry name" value="Head domain of nucleotide exchange factor GrpE"/>
    <property type="match status" value="1"/>
</dbReference>
<dbReference type="PROSITE" id="PS01071">
    <property type="entry name" value="GRPE"/>
    <property type="match status" value="1"/>
</dbReference>
<organism>
    <name type="scientific">Blochmanniella floridana</name>
    <dbReference type="NCBI Taxonomy" id="203907"/>
    <lineage>
        <taxon>Bacteria</taxon>
        <taxon>Pseudomonadati</taxon>
        <taxon>Pseudomonadota</taxon>
        <taxon>Gammaproteobacteria</taxon>
        <taxon>Enterobacterales</taxon>
        <taxon>Enterobacteriaceae</taxon>
        <taxon>ant endosymbionts</taxon>
        <taxon>Candidatus Blochmanniella</taxon>
    </lineage>
</organism>
<name>GRPE_BLOFL</name>
<comment type="function">
    <text evidence="1">Participates actively in the response to hyperosmotic and heat shock by preventing the aggregation of stress-denatured proteins, in association with DnaK and GrpE. It is the nucleotide exchange factor for DnaK and may function as a thermosensor. Unfolded proteins bind initially to DnaJ; upon interaction with the DnaJ-bound protein, DnaK hydrolyzes its bound ATP, resulting in the formation of a stable complex. GrpE releases ADP from DnaK; ATP binding to DnaK triggers the release of the substrate protein, thus completing the reaction cycle. Several rounds of ATP-dependent interactions between DnaJ, DnaK and GrpE are required for fully efficient folding.</text>
</comment>
<comment type="subunit">
    <text evidence="1">Homodimer.</text>
</comment>
<comment type="subcellular location">
    <subcellularLocation>
        <location evidence="1">Cytoplasm</location>
    </subcellularLocation>
</comment>
<comment type="similarity">
    <text evidence="1">Belongs to the GrpE family.</text>
</comment>
<protein>
    <recommendedName>
        <fullName evidence="1">Protein GrpE</fullName>
    </recommendedName>
    <alternativeName>
        <fullName evidence="1">HSP-70 cofactor</fullName>
    </alternativeName>
</protein>
<proteinExistence type="inferred from homology"/>
<gene>
    <name evidence="1" type="primary">grpE</name>
    <name type="ordered locus">Bfl544</name>
</gene>
<evidence type="ECO:0000255" key="1">
    <source>
        <dbReference type="HAMAP-Rule" id="MF_01151"/>
    </source>
</evidence>
<sequence length="195" mass="22199">MIDNNKHNQDINASSANTIKKDELSESACKIDSIIDPKDDQIIQLQIQLAQIKEHERNTILRLKAEIENIQRRNIQEIEKAHKFALDRFVSELLPVIDNLERTLGIIDRSNTTLSAIIEGIDLTLKSFLDTVYKFGVKSIHEIHIPFNPEIHQAISTMESEKYESNQVLTIVQKGYSLNGRLVRPAMVIVAKSKS</sequence>
<keyword id="KW-0143">Chaperone</keyword>
<keyword id="KW-0963">Cytoplasm</keyword>
<keyword id="KW-1185">Reference proteome</keyword>
<keyword id="KW-0346">Stress response</keyword>
<reference key="1">
    <citation type="journal article" date="2003" name="Proc. Natl. Acad. Sci. U.S.A.">
        <title>The genome sequence of Blochmannia floridanus: comparative analysis of reduced genomes.</title>
        <authorList>
            <person name="Gil R."/>
            <person name="Silva F.J."/>
            <person name="Zientz E."/>
            <person name="Delmotte F."/>
            <person name="Gonzalez-Candelas F."/>
            <person name="Latorre A."/>
            <person name="Rausell C."/>
            <person name="Kamerbeek J."/>
            <person name="Gadau J."/>
            <person name="Hoelldobler B."/>
            <person name="van Ham R.C.H.J."/>
            <person name="Gross R."/>
            <person name="Moya A."/>
        </authorList>
    </citation>
    <scope>NUCLEOTIDE SEQUENCE [LARGE SCALE GENOMIC DNA]</scope>
</reference>
<feature type="chain" id="PRO_0000113764" description="Protein GrpE">
    <location>
        <begin position="1"/>
        <end position="195"/>
    </location>
</feature>
<accession>Q7VRQ6</accession>